<organism>
    <name type="scientific">Ehrlichia chaffeensis (strain ATCC CRL-10679 / Arkansas)</name>
    <dbReference type="NCBI Taxonomy" id="205920"/>
    <lineage>
        <taxon>Bacteria</taxon>
        <taxon>Pseudomonadati</taxon>
        <taxon>Pseudomonadota</taxon>
        <taxon>Alphaproteobacteria</taxon>
        <taxon>Rickettsiales</taxon>
        <taxon>Anaplasmataceae</taxon>
        <taxon>Ehrlichia</taxon>
    </lineage>
</organism>
<name>PLSY_EHRCR</name>
<evidence type="ECO:0000255" key="1">
    <source>
        <dbReference type="HAMAP-Rule" id="MF_01043"/>
    </source>
</evidence>
<keyword id="KW-0997">Cell inner membrane</keyword>
<keyword id="KW-1003">Cell membrane</keyword>
<keyword id="KW-0444">Lipid biosynthesis</keyword>
<keyword id="KW-0443">Lipid metabolism</keyword>
<keyword id="KW-0472">Membrane</keyword>
<keyword id="KW-0594">Phospholipid biosynthesis</keyword>
<keyword id="KW-1208">Phospholipid metabolism</keyword>
<keyword id="KW-1185">Reference proteome</keyword>
<keyword id="KW-0808">Transferase</keyword>
<keyword id="KW-0812">Transmembrane</keyword>
<keyword id="KW-1133">Transmembrane helix</keyword>
<comment type="function">
    <text evidence="1">Catalyzes the transfer of an acyl group from acyl-phosphate (acyl-PO(4)) to glycerol-3-phosphate (G3P) to form lysophosphatidic acid (LPA). This enzyme utilizes acyl-phosphate as fatty acyl donor, but not acyl-CoA or acyl-ACP.</text>
</comment>
<comment type="catalytic activity">
    <reaction evidence="1">
        <text>an acyl phosphate + sn-glycerol 3-phosphate = a 1-acyl-sn-glycero-3-phosphate + phosphate</text>
        <dbReference type="Rhea" id="RHEA:34075"/>
        <dbReference type="ChEBI" id="CHEBI:43474"/>
        <dbReference type="ChEBI" id="CHEBI:57597"/>
        <dbReference type="ChEBI" id="CHEBI:57970"/>
        <dbReference type="ChEBI" id="CHEBI:59918"/>
        <dbReference type="EC" id="2.3.1.275"/>
    </reaction>
</comment>
<comment type="pathway">
    <text evidence="1">Lipid metabolism; phospholipid metabolism.</text>
</comment>
<comment type="subunit">
    <text evidence="1">Probably interacts with PlsX.</text>
</comment>
<comment type="subcellular location">
    <subcellularLocation>
        <location evidence="1">Cell inner membrane</location>
        <topology evidence="1">Multi-pass membrane protein</topology>
    </subcellularLocation>
</comment>
<comment type="similarity">
    <text evidence="1">Belongs to the PlsY family.</text>
</comment>
<proteinExistence type="inferred from homology"/>
<feature type="chain" id="PRO_0000250300" description="Glycerol-3-phosphate acyltransferase">
    <location>
        <begin position="1"/>
        <end position="195"/>
    </location>
</feature>
<feature type="transmembrane region" description="Helical" evidence="1">
    <location>
        <begin position="3"/>
        <end position="23"/>
    </location>
</feature>
<feature type="transmembrane region" description="Helical" evidence="1">
    <location>
        <begin position="53"/>
        <end position="73"/>
    </location>
</feature>
<feature type="transmembrane region" description="Helical" evidence="1">
    <location>
        <begin position="80"/>
        <end position="100"/>
    </location>
</feature>
<feature type="transmembrane region" description="Helical" evidence="1">
    <location>
        <begin position="115"/>
        <end position="135"/>
    </location>
</feature>
<feature type="transmembrane region" description="Helical" evidence="1">
    <location>
        <begin position="147"/>
        <end position="167"/>
    </location>
</feature>
<protein>
    <recommendedName>
        <fullName evidence="1">Glycerol-3-phosphate acyltransferase</fullName>
    </recommendedName>
    <alternativeName>
        <fullName evidence="1">Acyl-PO4 G3P acyltransferase</fullName>
    </alternativeName>
    <alternativeName>
        <fullName evidence="1">Acyl-phosphate--glycerol-3-phosphate acyltransferase</fullName>
    </alternativeName>
    <alternativeName>
        <fullName evidence="1">G3P acyltransferase</fullName>
        <shortName evidence="1">GPAT</shortName>
        <ecNumber evidence="1">2.3.1.275</ecNumber>
    </alternativeName>
    <alternativeName>
        <fullName evidence="1">Lysophosphatidic acid synthase</fullName>
        <shortName evidence="1">LPA synthase</shortName>
    </alternativeName>
</protein>
<dbReference type="EC" id="2.3.1.275" evidence="1"/>
<dbReference type="EMBL" id="CP000236">
    <property type="protein sequence ID" value="ABD45136.1"/>
    <property type="molecule type" value="Genomic_DNA"/>
</dbReference>
<dbReference type="RefSeq" id="WP_011452357.1">
    <property type="nucleotide sequence ID" value="NC_007799.1"/>
</dbReference>
<dbReference type="SMR" id="Q2GI73"/>
<dbReference type="STRING" id="205920.ECH_0027"/>
<dbReference type="KEGG" id="ech:ECH_0027"/>
<dbReference type="eggNOG" id="COG0344">
    <property type="taxonomic scope" value="Bacteria"/>
</dbReference>
<dbReference type="HOGENOM" id="CLU_081254_0_0_5"/>
<dbReference type="OrthoDB" id="9777124at2"/>
<dbReference type="UniPathway" id="UPA00085"/>
<dbReference type="Proteomes" id="UP000008320">
    <property type="component" value="Chromosome"/>
</dbReference>
<dbReference type="GO" id="GO:0005886">
    <property type="term" value="C:plasma membrane"/>
    <property type="evidence" value="ECO:0007669"/>
    <property type="project" value="UniProtKB-SubCell"/>
</dbReference>
<dbReference type="GO" id="GO:0043772">
    <property type="term" value="F:acyl-phosphate glycerol-3-phosphate acyltransferase activity"/>
    <property type="evidence" value="ECO:0007669"/>
    <property type="project" value="UniProtKB-UniRule"/>
</dbReference>
<dbReference type="GO" id="GO:0008654">
    <property type="term" value="P:phospholipid biosynthetic process"/>
    <property type="evidence" value="ECO:0007669"/>
    <property type="project" value="UniProtKB-UniRule"/>
</dbReference>
<dbReference type="HAMAP" id="MF_01043">
    <property type="entry name" value="PlsY"/>
    <property type="match status" value="1"/>
</dbReference>
<dbReference type="InterPro" id="IPR003811">
    <property type="entry name" value="G3P_acylTferase_PlsY"/>
</dbReference>
<dbReference type="NCBIfam" id="TIGR00023">
    <property type="entry name" value="glycerol-3-phosphate 1-O-acyltransferase PlsY"/>
    <property type="match status" value="1"/>
</dbReference>
<dbReference type="PANTHER" id="PTHR30309:SF0">
    <property type="entry name" value="GLYCEROL-3-PHOSPHATE ACYLTRANSFERASE-RELATED"/>
    <property type="match status" value="1"/>
</dbReference>
<dbReference type="PANTHER" id="PTHR30309">
    <property type="entry name" value="INNER MEMBRANE PROTEIN YGIH"/>
    <property type="match status" value="1"/>
</dbReference>
<dbReference type="Pfam" id="PF02660">
    <property type="entry name" value="G3P_acyltransf"/>
    <property type="match status" value="1"/>
</dbReference>
<dbReference type="SMART" id="SM01207">
    <property type="entry name" value="G3P_acyltransf"/>
    <property type="match status" value="1"/>
</dbReference>
<accession>Q2GI73</accession>
<sequence length="195" mass="21441">MNIHAVVIVLSYLIGSIPFGLILSYIGGLGDIRKVGSGNIGATNVFRKSKKLAVMTLLLDAVKGLISVLLAKIYSTDQTFAFISAMFSIIGHMFPVWLLFKGGKGISTLLGSMVLIEYKFVICFLFIWITLFAIFKYSSLSSIVSTIFVALLVYMYYTMNDTAVFIAMSLLIITQHADNIARMLSGKENKLNIGL</sequence>
<gene>
    <name evidence="1" type="primary">plsY</name>
    <name type="ordered locus">ECH_0027</name>
</gene>
<reference key="1">
    <citation type="journal article" date="2006" name="PLoS Genet.">
        <title>Comparative genomics of emerging human ehrlichiosis agents.</title>
        <authorList>
            <person name="Dunning Hotopp J.C."/>
            <person name="Lin M."/>
            <person name="Madupu R."/>
            <person name="Crabtree J."/>
            <person name="Angiuoli S.V."/>
            <person name="Eisen J.A."/>
            <person name="Seshadri R."/>
            <person name="Ren Q."/>
            <person name="Wu M."/>
            <person name="Utterback T.R."/>
            <person name="Smith S."/>
            <person name="Lewis M."/>
            <person name="Khouri H."/>
            <person name="Zhang C."/>
            <person name="Niu H."/>
            <person name="Lin Q."/>
            <person name="Ohashi N."/>
            <person name="Zhi N."/>
            <person name="Nelson W.C."/>
            <person name="Brinkac L.M."/>
            <person name="Dodson R.J."/>
            <person name="Rosovitz M.J."/>
            <person name="Sundaram J.P."/>
            <person name="Daugherty S.C."/>
            <person name="Davidsen T."/>
            <person name="Durkin A.S."/>
            <person name="Gwinn M.L."/>
            <person name="Haft D.H."/>
            <person name="Selengut J.D."/>
            <person name="Sullivan S.A."/>
            <person name="Zafar N."/>
            <person name="Zhou L."/>
            <person name="Benahmed F."/>
            <person name="Forberger H."/>
            <person name="Halpin R."/>
            <person name="Mulligan S."/>
            <person name="Robinson J."/>
            <person name="White O."/>
            <person name="Rikihisa Y."/>
            <person name="Tettelin H."/>
        </authorList>
    </citation>
    <scope>NUCLEOTIDE SEQUENCE [LARGE SCALE GENOMIC DNA]</scope>
    <source>
        <strain>ATCC CRL-10679 / Arkansas</strain>
    </source>
</reference>